<feature type="chain" id="PRO_1000060546" description="Integration host factor subunit alpha">
    <location>
        <begin position="1"/>
        <end position="101"/>
    </location>
</feature>
<evidence type="ECO:0000255" key="1">
    <source>
        <dbReference type="HAMAP-Rule" id="MF_00380"/>
    </source>
</evidence>
<sequence length="101" mass="11614">MSLTKADMAERLFEEVGLNKREAKELVELFFEEIRTALENGEPVKLSSFGNFELRDKNERPGRNPKTGEEIPISARRVVTFRPGQKLKSRVESYAGTREEQ</sequence>
<name>IHFA_HALHL</name>
<proteinExistence type="inferred from homology"/>
<dbReference type="EMBL" id="CP000544">
    <property type="protein sequence ID" value="ABM61221.1"/>
    <property type="molecule type" value="Genomic_DNA"/>
</dbReference>
<dbReference type="RefSeq" id="WP_011813244.1">
    <property type="nucleotide sequence ID" value="NC_008789.1"/>
</dbReference>
<dbReference type="SMR" id="A1WU59"/>
<dbReference type="STRING" id="349124.Hhal_0433"/>
<dbReference type="KEGG" id="hha:Hhal_0433"/>
<dbReference type="eggNOG" id="COG0776">
    <property type="taxonomic scope" value="Bacteria"/>
</dbReference>
<dbReference type="HOGENOM" id="CLU_105066_1_3_6"/>
<dbReference type="OrthoDB" id="9797747at2"/>
<dbReference type="Proteomes" id="UP000000647">
    <property type="component" value="Chromosome"/>
</dbReference>
<dbReference type="GO" id="GO:0005829">
    <property type="term" value="C:cytosol"/>
    <property type="evidence" value="ECO:0007669"/>
    <property type="project" value="TreeGrafter"/>
</dbReference>
<dbReference type="GO" id="GO:0003677">
    <property type="term" value="F:DNA binding"/>
    <property type="evidence" value="ECO:0007669"/>
    <property type="project" value="UniProtKB-UniRule"/>
</dbReference>
<dbReference type="GO" id="GO:0030527">
    <property type="term" value="F:structural constituent of chromatin"/>
    <property type="evidence" value="ECO:0007669"/>
    <property type="project" value="InterPro"/>
</dbReference>
<dbReference type="GO" id="GO:0006310">
    <property type="term" value="P:DNA recombination"/>
    <property type="evidence" value="ECO:0007669"/>
    <property type="project" value="UniProtKB-UniRule"/>
</dbReference>
<dbReference type="GO" id="GO:0009893">
    <property type="term" value="P:positive regulation of metabolic process"/>
    <property type="evidence" value="ECO:0007669"/>
    <property type="project" value="UniProtKB-ARBA"/>
</dbReference>
<dbReference type="GO" id="GO:0006355">
    <property type="term" value="P:regulation of DNA-templated transcription"/>
    <property type="evidence" value="ECO:0007669"/>
    <property type="project" value="UniProtKB-UniRule"/>
</dbReference>
<dbReference type="GO" id="GO:0006417">
    <property type="term" value="P:regulation of translation"/>
    <property type="evidence" value="ECO:0007669"/>
    <property type="project" value="UniProtKB-UniRule"/>
</dbReference>
<dbReference type="CDD" id="cd13835">
    <property type="entry name" value="IHF_A"/>
    <property type="match status" value="1"/>
</dbReference>
<dbReference type="FunFam" id="4.10.520.10:FF:000002">
    <property type="entry name" value="Integration host factor subunit alpha"/>
    <property type="match status" value="1"/>
</dbReference>
<dbReference type="Gene3D" id="4.10.520.10">
    <property type="entry name" value="IHF-like DNA-binding proteins"/>
    <property type="match status" value="1"/>
</dbReference>
<dbReference type="HAMAP" id="MF_00380">
    <property type="entry name" value="IHF_alpha"/>
    <property type="match status" value="1"/>
</dbReference>
<dbReference type="InterPro" id="IPR000119">
    <property type="entry name" value="Hist_DNA-bd"/>
</dbReference>
<dbReference type="InterPro" id="IPR020816">
    <property type="entry name" value="Histone-like_DNA-bd_CS"/>
</dbReference>
<dbReference type="InterPro" id="IPR010992">
    <property type="entry name" value="IHF-like_DNA-bd_dom_sf"/>
</dbReference>
<dbReference type="InterPro" id="IPR005684">
    <property type="entry name" value="IHF_alpha"/>
</dbReference>
<dbReference type="NCBIfam" id="TIGR00987">
    <property type="entry name" value="himA"/>
    <property type="match status" value="1"/>
</dbReference>
<dbReference type="NCBIfam" id="NF001401">
    <property type="entry name" value="PRK00285.1"/>
    <property type="match status" value="1"/>
</dbReference>
<dbReference type="PANTHER" id="PTHR33175">
    <property type="entry name" value="DNA-BINDING PROTEIN HU"/>
    <property type="match status" value="1"/>
</dbReference>
<dbReference type="PANTHER" id="PTHR33175:SF2">
    <property type="entry name" value="INTEGRATION HOST FACTOR SUBUNIT ALPHA"/>
    <property type="match status" value="1"/>
</dbReference>
<dbReference type="Pfam" id="PF00216">
    <property type="entry name" value="Bac_DNA_binding"/>
    <property type="match status" value="1"/>
</dbReference>
<dbReference type="PRINTS" id="PR01727">
    <property type="entry name" value="DNABINDINGHU"/>
</dbReference>
<dbReference type="SMART" id="SM00411">
    <property type="entry name" value="BHL"/>
    <property type="match status" value="1"/>
</dbReference>
<dbReference type="SUPFAM" id="SSF47729">
    <property type="entry name" value="IHF-like DNA-binding proteins"/>
    <property type="match status" value="1"/>
</dbReference>
<dbReference type="PROSITE" id="PS00045">
    <property type="entry name" value="HISTONE_LIKE"/>
    <property type="match status" value="1"/>
</dbReference>
<gene>
    <name evidence="1" type="primary">ihfA</name>
    <name evidence="1" type="synonym">himA</name>
    <name type="ordered locus">Hhal_0433</name>
</gene>
<organism>
    <name type="scientific">Halorhodospira halophila (strain DSM 244 / SL1)</name>
    <name type="common">Ectothiorhodospira halophila (strain DSM 244 / SL1)</name>
    <dbReference type="NCBI Taxonomy" id="349124"/>
    <lineage>
        <taxon>Bacteria</taxon>
        <taxon>Pseudomonadati</taxon>
        <taxon>Pseudomonadota</taxon>
        <taxon>Gammaproteobacteria</taxon>
        <taxon>Chromatiales</taxon>
        <taxon>Ectothiorhodospiraceae</taxon>
        <taxon>Halorhodospira</taxon>
    </lineage>
</organism>
<accession>A1WU59</accession>
<reference key="1">
    <citation type="submission" date="2006-12" db="EMBL/GenBank/DDBJ databases">
        <title>Complete sequence of Halorhodospira halophila SL1.</title>
        <authorList>
            <consortium name="US DOE Joint Genome Institute"/>
            <person name="Copeland A."/>
            <person name="Lucas S."/>
            <person name="Lapidus A."/>
            <person name="Barry K."/>
            <person name="Detter J.C."/>
            <person name="Glavina del Rio T."/>
            <person name="Hammon N."/>
            <person name="Israni S."/>
            <person name="Dalin E."/>
            <person name="Tice H."/>
            <person name="Pitluck S."/>
            <person name="Saunders E."/>
            <person name="Brettin T."/>
            <person name="Bruce D."/>
            <person name="Han C."/>
            <person name="Tapia R."/>
            <person name="Schmutz J."/>
            <person name="Larimer F."/>
            <person name="Land M."/>
            <person name="Hauser L."/>
            <person name="Kyrpides N."/>
            <person name="Mikhailova N."/>
            <person name="Hoff W."/>
            <person name="Richardson P."/>
        </authorList>
    </citation>
    <scope>NUCLEOTIDE SEQUENCE [LARGE SCALE GENOMIC DNA]</scope>
    <source>
        <strain>DSM 244 / SL1</strain>
    </source>
</reference>
<keyword id="KW-0233">DNA recombination</keyword>
<keyword id="KW-0238">DNA-binding</keyword>
<keyword id="KW-1185">Reference proteome</keyword>
<keyword id="KW-0804">Transcription</keyword>
<keyword id="KW-0805">Transcription regulation</keyword>
<keyword id="KW-0810">Translation regulation</keyword>
<protein>
    <recommendedName>
        <fullName evidence="1">Integration host factor subunit alpha</fullName>
        <shortName evidence="1">IHF-alpha</shortName>
    </recommendedName>
</protein>
<comment type="function">
    <text evidence="1">This protein is one of the two subunits of integration host factor, a specific DNA-binding protein that functions in genetic recombination as well as in transcriptional and translational control.</text>
</comment>
<comment type="subunit">
    <text evidence="1">Heterodimer of an alpha and a beta chain.</text>
</comment>
<comment type="similarity">
    <text evidence="1">Belongs to the bacterial histone-like protein family.</text>
</comment>